<feature type="chain" id="PRO_1000022904" description="2-C-methyl-D-erythritol 4-phosphate cytidylyltransferase">
    <location>
        <begin position="1"/>
        <end position="236"/>
    </location>
</feature>
<feature type="site" description="Transition state stabilizer" evidence="1">
    <location>
        <position position="17"/>
    </location>
</feature>
<feature type="site" description="Transition state stabilizer" evidence="1">
    <location>
        <position position="24"/>
    </location>
</feature>
<feature type="site" description="Positions MEP for the nucleophilic attack" evidence="1">
    <location>
        <position position="159"/>
    </location>
</feature>
<feature type="site" description="Positions MEP for the nucleophilic attack" evidence="1">
    <location>
        <position position="215"/>
    </location>
</feature>
<reference key="1">
    <citation type="journal article" date="2010" name="Genome Biol. Evol.">
        <title>Continuing evolution of Burkholderia mallei through genome reduction and large-scale rearrangements.</title>
        <authorList>
            <person name="Losada L."/>
            <person name="Ronning C.M."/>
            <person name="DeShazer D."/>
            <person name="Woods D."/>
            <person name="Fedorova N."/>
            <person name="Kim H.S."/>
            <person name="Shabalina S.A."/>
            <person name="Pearson T.R."/>
            <person name="Brinkac L."/>
            <person name="Tan P."/>
            <person name="Nandi T."/>
            <person name="Crabtree J."/>
            <person name="Badger J."/>
            <person name="Beckstrom-Sternberg S."/>
            <person name="Saqib M."/>
            <person name="Schutzer S.E."/>
            <person name="Keim P."/>
            <person name="Nierman W.C."/>
        </authorList>
    </citation>
    <scope>NUCLEOTIDE SEQUENCE [LARGE SCALE GENOMIC DNA]</scope>
    <source>
        <strain>NCTC 10247</strain>
    </source>
</reference>
<protein>
    <recommendedName>
        <fullName evidence="1">2-C-methyl-D-erythritol 4-phosphate cytidylyltransferase</fullName>
        <ecNumber evidence="1">2.7.7.60</ecNumber>
    </recommendedName>
    <alternativeName>
        <fullName evidence="1">4-diphosphocytidyl-2C-methyl-D-erythritol synthase</fullName>
    </alternativeName>
    <alternativeName>
        <fullName evidence="1">MEP cytidylyltransferase</fullName>
        <shortName evidence="1">MCT</shortName>
    </alternativeName>
</protein>
<organism>
    <name type="scientific">Burkholderia mallei (strain NCTC 10247)</name>
    <dbReference type="NCBI Taxonomy" id="320389"/>
    <lineage>
        <taxon>Bacteria</taxon>
        <taxon>Pseudomonadati</taxon>
        <taxon>Pseudomonadota</taxon>
        <taxon>Betaproteobacteria</taxon>
        <taxon>Burkholderiales</taxon>
        <taxon>Burkholderiaceae</taxon>
        <taxon>Burkholderia</taxon>
        <taxon>pseudomallei group</taxon>
    </lineage>
</organism>
<accession>A3MKM4</accession>
<sequence length="236" mass="25379">MTSRLFALIPCAGTGSRSGSALPKQYRTLAGRALLHYTLAAFDACSEFAQTLVVISPDDAHFDARRFAGLRFAVRRCGGASRQASVMNGLIQLAEFGATDADWVLVHDAARPGITPALIRTLIGALKDDPVGGIVALPVADTLKRVPAGGDAIERTESRNGLWQAQTPQMFRIGMLRDAIRRAQLDGHDLTDEASAIEWAGHTPRVVQGSLRNFKVTYPEDFDLAEAILAQPARAS</sequence>
<name>ISPD_BURM7</name>
<comment type="function">
    <text evidence="1">Catalyzes the formation of 4-diphosphocytidyl-2-C-methyl-D-erythritol from CTP and 2-C-methyl-D-erythritol 4-phosphate (MEP).</text>
</comment>
<comment type="catalytic activity">
    <reaction evidence="1">
        <text>2-C-methyl-D-erythritol 4-phosphate + CTP + H(+) = 4-CDP-2-C-methyl-D-erythritol + diphosphate</text>
        <dbReference type="Rhea" id="RHEA:13429"/>
        <dbReference type="ChEBI" id="CHEBI:15378"/>
        <dbReference type="ChEBI" id="CHEBI:33019"/>
        <dbReference type="ChEBI" id="CHEBI:37563"/>
        <dbReference type="ChEBI" id="CHEBI:57823"/>
        <dbReference type="ChEBI" id="CHEBI:58262"/>
        <dbReference type="EC" id="2.7.7.60"/>
    </reaction>
</comment>
<comment type="pathway">
    <text evidence="1">Isoprenoid biosynthesis; isopentenyl diphosphate biosynthesis via DXP pathway; isopentenyl diphosphate from 1-deoxy-D-xylulose 5-phosphate: step 2/6.</text>
</comment>
<comment type="similarity">
    <text evidence="1">Belongs to the IspD/TarI cytidylyltransferase family. IspD subfamily.</text>
</comment>
<keyword id="KW-0414">Isoprene biosynthesis</keyword>
<keyword id="KW-0548">Nucleotidyltransferase</keyword>
<keyword id="KW-0808">Transferase</keyword>
<proteinExistence type="inferred from homology"/>
<evidence type="ECO:0000255" key="1">
    <source>
        <dbReference type="HAMAP-Rule" id="MF_00108"/>
    </source>
</evidence>
<gene>
    <name evidence="1" type="primary">ispD</name>
    <name type="ordered locus">BMA10247_1259</name>
</gene>
<dbReference type="EC" id="2.7.7.60" evidence="1"/>
<dbReference type="EMBL" id="CP000548">
    <property type="protein sequence ID" value="ABO07013.1"/>
    <property type="molecule type" value="Genomic_DNA"/>
</dbReference>
<dbReference type="RefSeq" id="WP_004191584.1">
    <property type="nucleotide sequence ID" value="NZ_CP007802.1"/>
</dbReference>
<dbReference type="SMR" id="A3MKM4"/>
<dbReference type="GeneID" id="93060628"/>
<dbReference type="KEGG" id="bmaz:BM44_1858"/>
<dbReference type="KEGG" id="bmn:BMA10247_1259"/>
<dbReference type="PATRIC" id="fig|320389.8.peg.2085"/>
<dbReference type="UniPathway" id="UPA00056">
    <property type="reaction ID" value="UER00093"/>
</dbReference>
<dbReference type="GO" id="GO:0050518">
    <property type="term" value="F:2-C-methyl-D-erythritol 4-phosphate cytidylyltransferase activity"/>
    <property type="evidence" value="ECO:0007669"/>
    <property type="project" value="UniProtKB-UniRule"/>
</dbReference>
<dbReference type="GO" id="GO:0019288">
    <property type="term" value="P:isopentenyl diphosphate biosynthetic process, methylerythritol 4-phosphate pathway"/>
    <property type="evidence" value="ECO:0007669"/>
    <property type="project" value="UniProtKB-UniRule"/>
</dbReference>
<dbReference type="CDD" id="cd02516">
    <property type="entry name" value="CDP-ME_synthetase"/>
    <property type="match status" value="1"/>
</dbReference>
<dbReference type="FunFam" id="3.90.550.10:FF:000003">
    <property type="entry name" value="2-C-methyl-D-erythritol 4-phosphate cytidylyltransferase"/>
    <property type="match status" value="1"/>
</dbReference>
<dbReference type="Gene3D" id="3.90.550.10">
    <property type="entry name" value="Spore Coat Polysaccharide Biosynthesis Protein SpsA, Chain A"/>
    <property type="match status" value="1"/>
</dbReference>
<dbReference type="HAMAP" id="MF_00108">
    <property type="entry name" value="IspD"/>
    <property type="match status" value="1"/>
</dbReference>
<dbReference type="InterPro" id="IPR001228">
    <property type="entry name" value="IspD"/>
</dbReference>
<dbReference type="InterPro" id="IPR034683">
    <property type="entry name" value="IspD/TarI"/>
</dbReference>
<dbReference type="InterPro" id="IPR050088">
    <property type="entry name" value="IspD/TarI_cytidylyltransf_bact"/>
</dbReference>
<dbReference type="InterPro" id="IPR018294">
    <property type="entry name" value="ISPD_synthase_CS"/>
</dbReference>
<dbReference type="InterPro" id="IPR029044">
    <property type="entry name" value="Nucleotide-diphossugar_trans"/>
</dbReference>
<dbReference type="NCBIfam" id="TIGR00453">
    <property type="entry name" value="ispD"/>
    <property type="match status" value="1"/>
</dbReference>
<dbReference type="PANTHER" id="PTHR32125">
    <property type="entry name" value="2-C-METHYL-D-ERYTHRITOL 4-PHOSPHATE CYTIDYLYLTRANSFERASE, CHLOROPLASTIC"/>
    <property type="match status" value="1"/>
</dbReference>
<dbReference type="PANTHER" id="PTHR32125:SF4">
    <property type="entry name" value="2-C-METHYL-D-ERYTHRITOL 4-PHOSPHATE CYTIDYLYLTRANSFERASE, CHLOROPLASTIC"/>
    <property type="match status" value="1"/>
</dbReference>
<dbReference type="Pfam" id="PF01128">
    <property type="entry name" value="IspD"/>
    <property type="match status" value="1"/>
</dbReference>
<dbReference type="SUPFAM" id="SSF53448">
    <property type="entry name" value="Nucleotide-diphospho-sugar transferases"/>
    <property type="match status" value="1"/>
</dbReference>
<dbReference type="PROSITE" id="PS01295">
    <property type="entry name" value="ISPD"/>
    <property type="match status" value="1"/>
</dbReference>